<feature type="chain" id="PRO_0000053187" description="Hemoglobin subunit epsilon">
    <location>
        <begin position="1"/>
        <end position="147"/>
    </location>
</feature>
<feature type="domain" description="Globin" evidence="2">
    <location>
        <begin position="3"/>
        <end position="147"/>
    </location>
</feature>
<feature type="binding site" description="distal binding residue" evidence="2">
    <location>
        <position position="64"/>
    </location>
    <ligand>
        <name>heme b</name>
        <dbReference type="ChEBI" id="CHEBI:60344"/>
    </ligand>
    <ligandPart>
        <name>Fe</name>
        <dbReference type="ChEBI" id="CHEBI:18248"/>
    </ligandPart>
</feature>
<feature type="binding site" description="proximal binding residue" evidence="2">
    <location>
        <position position="93"/>
    </location>
    <ligand>
        <name>heme b</name>
        <dbReference type="ChEBI" id="CHEBI:60344"/>
    </ligand>
    <ligandPart>
        <name>Fe</name>
        <dbReference type="ChEBI" id="CHEBI:18248"/>
    </ligandPart>
</feature>
<feature type="modified residue" description="Phosphoserine" evidence="1">
    <location>
        <position position="14"/>
    </location>
</feature>
<feature type="modified residue" description="Phosphoserine" evidence="1">
    <location>
        <position position="51"/>
    </location>
</feature>
<organism>
    <name type="scientific">Ateles belzebuth</name>
    <name type="common">White-bellied spider monkey</name>
    <dbReference type="NCBI Taxonomy" id="9507"/>
    <lineage>
        <taxon>Eukaryota</taxon>
        <taxon>Metazoa</taxon>
        <taxon>Chordata</taxon>
        <taxon>Craniata</taxon>
        <taxon>Vertebrata</taxon>
        <taxon>Euteleostomi</taxon>
        <taxon>Mammalia</taxon>
        <taxon>Eutheria</taxon>
        <taxon>Euarchontoglires</taxon>
        <taxon>Primates</taxon>
        <taxon>Haplorrhini</taxon>
        <taxon>Platyrrhini</taxon>
        <taxon>Atelidae</taxon>
        <taxon>Atelinae</taxon>
        <taxon>Ateles</taxon>
    </lineage>
</organism>
<comment type="function">
    <text>The epsilon chain is a beta-type chain of early mammalian embryonic hemoglobin.</text>
</comment>
<comment type="subunit">
    <text>Heterotetramer of two alpha chains and two epsilon chains in early embryonic hemoglobin Gower-2; two zeta chains and two epsilon chains in early embryonic hemoglobin Gower-1.</text>
</comment>
<comment type="tissue specificity">
    <text>Red blood cells.</text>
</comment>
<comment type="similarity">
    <text evidence="2">Belongs to the globin family.</text>
</comment>
<evidence type="ECO:0000250" key="1">
    <source>
        <dbReference type="UniProtKB" id="P02100"/>
    </source>
</evidence>
<evidence type="ECO:0000255" key="2">
    <source>
        <dbReference type="PROSITE-ProRule" id="PRU00238"/>
    </source>
</evidence>
<name>HBE_ATEBE</name>
<gene>
    <name type="primary">HBE1</name>
</gene>
<accession>P51438</accession>
<proteinExistence type="evidence at transcript level"/>
<protein>
    <recommendedName>
        <fullName>Hemoglobin subunit epsilon</fullName>
    </recommendedName>
    <alternativeName>
        <fullName>Epsilon-globin</fullName>
    </alternativeName>
    <alternativeName>
        <fullName>Hemoglobin epsilon chain</fullName>
    </alternativeName>
</protein>
<keyword id="KW-0349">Heme</keyword>
<keyword id="KW-0408">Iron</keyword>
<keyword id="KW-0479">Metal-binding</keyword>
<keyword id="KW-0561">Oxygen transport</keyword>
<keyword id="KW-0597">Phosphoprotein</keyword>
<keyword id="KW-0813">Transport</keyword>
<sequence>MVHLTAEEKAAITSLWGKMNVEEAGGEALGRLLVVYPWTQRFFDNFGNLSSPSAILGNPKVKAHGKKVLTSFGDAIKNMDNLKTTFAKLSELHCDKLHVDPENFRLLGNVMVIILATHFGKEFTPEVQAAWQKLVSAVAIALGHKYH</sequence>
<reference key="1">
    <citation type="journal article" date="1993" name="Mol. Phylogenet. Evol.">
        <title>Molecular phylogeny of the New World monkeys (Platyrrhini, primates).</title>
        <authorList>
            <person name="Schneider H."/>
            <person name="Schneider M.P.C."/>
            <person name="Sampaio I."/>
            <person name="Harada M.L."/>
            <person name="Stanhope M.J."/>
            <person name="Czekysbuaj J."/>
            <person name="Goodman M."/>
        </authorList>
    </citation>
    <scope>NUCLEOTIDE SEQUENCE [GENOMIC DNA]</scope>
    <source>
        <tissue>Lymphocyte</tissue>
    </source>
</reference>
<dbReference type="EMBL" id="L25369">
    <property type="protein sequence ID" value="AAA36925.1"/>
    <property type="molecule type" value="Genomic_DNA"/>
</dbReference>
<dbReference type="SMR" id="P51438"/>
<dbReference type="GO" id="GO:0072562">
    <property type="term" value="C:blood microparticle"/>
    <property type="evidence" value="ECO:0007669"/>
    <property type="project" value="TreeGrafter"/>
</dbReference>
<dbReference type="GO" id="GO:0031838">
    <property type="term" value="C:haptoglobin-hemoglobin complex"/>
    <property type="evidence" value="ECO:0007669"/>
    <property type="project" value="TreeGrafter"/>
</dbReference>
<dbReference type="GO" id="GO:0005833">
    <property type="term" value="C:hemoglobin complex"/>
    <property type="evidence" value="ECO:0007669"/>
    <property type="project" value="InterPro"/>
</dbReference>
<dbReference type="GO" id="GO:0031720">
    <property type="term" value="F:haptoglobin binding"/>
    <property type="evidence" value="ECO:0007669"/>
    <property type="project" value="TreeGrafter"/>
</dbReference>
<dbReference type="GO" id="GO:0020037">
    <property type="term" value="F:heme binding"/>
    <property type="evidence" value="ECO:0007669"/>
    <property type="project" value="InterPro"/>
</dbReference>
<dbReference type="GO" id="GO:0031721">
    <property type="term" value="F:hemoglobin alpha binding"/>
    <property type="evidence" value="ECO:0007669"/>
    <property type="project" value="TreeGrafter"/>
</dbReference>
<dbReference type="GO" id="GO:0046872">
    <property type="term" value="F:metal ion binding"/>
    <property type="evidence" value="ECO:0007669"/>
    <property type="project" value="UniProtKB-KW"/>
</dbReference>
<dbReference type="GO" id="GO:0043177">
    <property type="term" value="F:organic acid binding"/>
    <property type="evidence" value="ECO:0007669"/>
    <property type="project" value="TreeGrafter"/>
</dbReference>
<dbReference type="GO" id="GO:0019825">
    <property type="term" value="F:oxygen binding"/>
    <property type="evidence" value="ECO:0007669"/>
    <property type="project" value="InterPro"/>
</dbReference>
<dbReference type="GO" id="GO:0005344">
    <property type="term" value="F:oxygen carrier activity"/>
    <property type="evidence" value="ECO:0007669"/>
    <property type="project" value="UniProtKB-KW"/>
</dbReference>
<dbReference type="GO" id="GO:0004601">
    <property type="term" value="F:peroxidase activity"/>
    <property type="evidence" value="ECO:0007669"/>
    <property type="project" value="TreeGrafter"/>
</dbReference>
<dbReference type="GO" id="GO:0042744">
    <property type="term" value="P:hydrogen peroxide catabolic process"/>
    <property type="evidence" value="ECO:0007669"/>
    <property type="project" value="TreeGrafter"/>
</dbReference>
<dbReference type="CDD" id="cd08925">
    <property type="entry name" value="Hb-beta-like"/>
    <property type="match status" value="1"/>
</dbReference>
<dbReference type="FunFam" id="1.10.490.10:FF:000001">
    <property type="entry name" value="Hemoglobin subunit beta"/>
    <property type="match status" value="1"/>
</dbReference>
<dbReference type="Gene3D" id="1.10.490.10">
    <property type="entry name" value="Globins"/>
    <property type="match status" value="1"/>
</dbReference>
<dbReference type="InterPro" id="IPR000971">
    <property type="entry name" value="Globin"/>
</dbReference>
<dbReference type="InterPro" id="IPR009050">
    <property type="entry name" value="Globin-like_sf"/>
</dbReference>
<dbReference type="InterPro" id="IPR012292">
    <property type="entry name" value="Globin/Proto"/>
</dbReference>
<dbReference type="InterPro" id="IPR002337">
    <property type="entry name" value="Hemoglobin_b"/>
</dbReference>
<dbReference type="InterPro" id="IPR050056">
    <property type="entry name" value="Hemoglobin_oxygen_transport"/>
</dbReference>
<dbReference type="PANTHER" id="PTHR11442">
    <property type="entry name" value="HEMOGLOBIN FAMILY MEMBER"/>
    <property type="match status" value="1"/>
</dbReference>
<dbReference type="PANTHER" id="PTHR11442:SF7">
    <property type="entry name" value="HEMOGLOBIN SUBUNIT EPSILON"/>
    <property type="match status" value="1"/>
</dbReference>
<dbReference type="Pfam" id="PF00042">
    <property type="entry name" value="Globin"/>
    <property type="match status" value="1"/>
</dbReference>
<dbReference type="PRINTS" id="PR00814">
    <property type="entry name" value="BETAHAEM"/>
</dbReference>
<dbReference type="SUPFAM" id="SSF46458">
    <property type="entry name" value="Globin-like"/>
    <property type="match status" value="1"/>
</dbReference>
<dbReference type="PROSITE" id="PS01033">
    <property type="entry name" value="GLOBIN"/>
    <property type="match status" value="1"/>
</dbReference>